<dbReference type="EMBL" id="U81185">
    <property type="protein sequence ID" value="AAK91510.1"/>
    <property type="molecule type" value="Genomic_DNA"/>
</dbReference>
<dbReference type="RefSeq" id="WP_005886210.1">
    <property type="nucleotide sequence ID" value="NZ_QSTZ01000004.1"/>
</dbReference>
<dbReference type="SMR" id="Q93K57"/>
<dbReference type="GO" id="GO:0003677">
    <property type="term" value="F:DNA binding"/>
    <property type="evidence" value="ECO:0007669"/>
    <property type="project" value="UniProtKB-KW"/>
</dbReference>
<dbReference type="Gene3D" id="1.10.10.10">
    <property type="entry name" value="Winged helix-like DNA-binding domain superfamily/Winged helix DNA-binding domain"/>
    <property type="match status" value="1"/>
</dbReference>
<dbReference type="InterPro" id="IPR002577">
    <property type="entry name" value="HTH_HxlR"/>
</dbReference>
<dbReference type="InterPro" id="IPR036388">
    <property type="entry name" value="WH-like_DNA-bd_sf"/>
</dbReference>
<dbReference type="InterPro" id="IPR036390">
    <property type="entry name" value="WH_DNA-bd_sf"/>
</dbReference>
<dbReference type="PANTHER" id="PTHR33204:SF29">
    <property type="entry name" value="TRANSCRIPTIONAL REGULATOR"/>
    <property type="match status" value="1"/>
</dbReference>
<dbReference type="PANTHER" id="PTHR33204">
    <property type="entry name" value="TRANSCRIPTIONAL REGULATOR, MARR FAMILY"/>
    <property type="match status" value="1"/>
</dbReference>
<dbReference type="Pfam" id="PF01638">
    <property type="entry name" value="HxlR"/>
    <property type="match status" value="1"/>
</dbReference>
<dbReference type="SUPFAM" id="SSF46785">
    <property type="entry name" value="Winged helix' DNA-binding domain"/>
    <property type="match status" value="1"/>
</dbReference>
<dbReference type="PROSITE" id="PS51118">
    <property type="entry name" value="HTH_HXLR"/>
    <property type="match status" value="1"/>
</dbReference>
<protein>
    <recommendedName>
        <fullName>Putative regulatory protein MalR</fullName>
    </recommendedName>
</protein>
<accession>Q93K57</accession>
<feature type="chain" id="PRO_0000148880" description="Putative regulatory protein MalR">
    <location>
        <begin position="1"/>
        <end position="106"/>
    </location>
</feature>
<feature type="domain" description="HTH hxlR-type" evidence="1">
    <location>
        <begin position="12"/>
        <end position="106"/>
    </location>
</feature>
<comment type="function">
    <text>Potential regulator of the malBH genes.</text>
</comment>
<proteinExistence type="predicted"/>
<sequence length="106" mass="12501">MIDLERKNKYKCSIEYTLSFMGGKWKPIILWHLGTEGIHRYGELKRKLDGITHKMLAQQLKELADDNLIIRKEYPQVPPKVEYSITEKGMGLMEILNLMHKWGQEN</sequence>
<gene>
    <name type="primary">malR</name>
</gene>
<keyword id="KW-0238">DNA-binding</keyword>
<keyword id="KW-0804">Transcription</keyword>
<keyword id="KW-0805">Transcription regulation</keyword>
<evidence type="ECO:0000255" key="1">
    <source>
        <dbReference type="PROSITE-ProRule" id="PRU00435"/>
    </source>
</evidence>
<organism>
    <name type="scientific">Fusobacterium mortiferum</name>
    <dbReference type="NCBI Taxonomy" id="850"/>
    <lineage>
        <taxon>Bacteria</taxon>
        <taxon>Fusobacteriati</taxon>
        <taxon>Fusobacteriota</taxon>
        <taxon>Fusobacteriia</taxon>
        <taxon>Fusobacteriales</taxon>
        <taxon>Fusobacteriaceae</taxon>
        <taxon>Fusobacterium</taxon>
    </lineage>
</organism>
<name>MALR_FUSMR</name>
<reference key="1">
    <citation type="journal article" date="2002" name="Microbiology">
        <title>Metabolism of sucrose and its five isomers by Fusobacterium mortiferum.</title>
        <authorList>
            <person name="Pikis A."/>
            <person name="Immel S."/>
            <person name="Robrish S.A."/>
            <person name="Thompson J."/>
        </authorList>
    </citation>
    <scope>NUCLEOTIDE SEQUENCE [GENOMIC DNA]</scope>
    <source>
        <strain>ATCC 25557 / DSM 19809 / CCUG 14475 / VPI 4123A</strain>
    </source>
</reference>